<feature type="chain" id="PRO_0000246843" description="7-cyano-7-deazaguanine synthase">
    <location>
        <begin position="1"/>
        <end position="236"/>
    </location>
</feature>
<feature type="binding site" evidence="1">
    <location>
        <begin position="21"/>
        <end position="31"/>
    </location>
    <ligand>
        <name>ATP</name>
        <dbReference type="ChEBI" id="CHEBI:30616"/>
    </ligand>
</feature>
<feature type="binding site" evidence="1">
    <location>
        <position position="202"/>
    </location>
    <ligand>
        <name>Zn(2+)</name>
        <dbReference type="ChEBI" id="CHEBI:29105"/>
    </ligand>
</feature>
<feature type="binding site" evidence="1">
    <location>
        <position position="212"/>
    </location>
    <ligand>
        <name>Zn(2+)</name>
        <dbReference type="ChEBI" id="CHEBI:29105"/>
    </ligand>
</feature>
<feature type="binding site" evidence="1">
    <location>
        <position position="215"/>
    </location>
    <ligand>
        <name>Zn(2+)</name>
        <dbReference type="ChEBI" id="CHEBI:29105"/>
    </ligand>
</feature>
<feature type="binding site" evidence="1">
    <location>
        <position position="218"/>
    </location>
    <ligand>
        <name>Zn(2+)</name>
        <dbReference type="ChEBI" id="CHEBI:29105"/>
    </ligand>
</feature>
<comment type="function">
    <text evidence="1">Catalyzes the ATP-dependent conversion of 7-carboxy-7-deazaguanine (CDG) to 7-cyano-7-deazaguanine (preQ(0)).</text>
</comment>
<comment type="catalytic activity">
    <reaction evidence="1">
        <text>7-carboxy-7-deazaguanine + NH4(+) + ATP = 7-cyano-7-deazaguanine + ADP + phosphate + H2O + H(+)</text>
        <dbReference type="Rhea" id="RHEA:27982"/>
        <dbReference type="ChEBI" id="CHEBI:15377"/>
        <dbReference type="ChEBI" id="CHEBI:15378"/>
        <dbReference type="ChEBI" id="CHEBI:28938"/>
        <dbReference type="ChEBI" id="CHEBI:30616"/>
        <dbReference type="ChEBI" id="CHEBI:43474"/>
        <dbReference type="ChEBI" id="CHEBI:45075"/>
        <dbReference type="ChEBI" id="CHEBI:61036"/>
        <dbReference type="ChEBI" id="CHEBI:456216"/>
        <dbReference type="EC" id="6.3.4.20"/>
    </reaction>
</comment>
<comment type="cofactor">
    <cofactor evidence="1">
        <name>Zn(2+)</name>
        <dbReference type="ChEBI" id="CHEBI:29105"/>
    </cofactor>
    <text evidence="1">Binds 1 zinc ion per subunit.</text>
</comment>
<comment type="pathway">
    <text evidence="1">Purine metabolism; 7-cyano-7-deazaguanine biosynthesis.</text>
</comment>
<comment type="similarity">
    <text evidence="1">Belongs to the QueC family.</text>
</comment>
<gene>
    <name evidence="1" type="primary">queC</name>
    <name type="ordered locus">Francci3_3379</name>
</gene>
<protein>
    <recommendedName>
        <fullName evidence="1">7-cyano-7-deazaguanine synthase</fullName>
        <ecNumber evidence="1">6.3.4.20</ecNumber>
    </recommendedName>
    <alternativeName>
        <fullName evidence="1">7-cyano-7-carbaguanine synthase</fullName>
    </alternativeName>
    <alternativeName>
        <fullName evidence="1">PreQ(0) synthase</fullName>
    </alternativeName>
    <alternativeName>
        <fullName evidence="1">Queuosine biosynthesis protein QueC</fullName>
    </alternativeName>
</protein>
<accession>Q2J7K8</accession>
<keyword id="KW-0067">ATP-binding</keyword>
<keyword id="KW-0436">Ligase</keyword>
<keyword id="KW-0479">Metal-binding</keyword>
<keyword id="KW-0547">Nucleotide-binding</keyword>
<keyword id="KW-0671">Queuosine biosynthesis</keyword>
<keyword id="KW-1185">Reference proteome</keyword>
<keyword id="KW-0862">Zinc</keyword>
<sequence>MNPTRGAVGGTDPRPAAVVLLSGGLDSATVLAIANQQGFACHALSFRYGQRHEVELAAARRVASALGVVRHVVVDIDLGVFGGSALTDPTIAVPAAGTAEEIPVTYVPARNTIFLSFGLALAETAGAWDVFIGASSVDYSGYPDCRPEYLAAYQAMANLATKATVSGERTLSVHAPLMHLSKADTIRLGLSLGVDYGLTHSCYDPGPDGRPCGRCDSCSLRERGFTEVGVPDPAGG</sequence>
<dbReference type="EC" id="6.3.4.20" evidence="1"/>
<dbReference type="EMBL" id="CP000249">
    <property type="protein sequence ID" value="ABD12734.1"/>
    <property type="molecule type" value="Genomic_DNA"/>
</dbReference>
<dbReference type="RefSeq" id="WP_011437760.1">
    <property type="nucleotide sequence ID" value="NC_007777.1"/>
</dbReference>
<dbReference type="SMR" id="Q2J7K8"/>
<dbReference type="STRING" id="106370.Francci3_3379"/>
<dbReference type="KEGG" id="fra:Francci3_3379"/>
<dbReference type="eggNOG" id="COG0603">
    <property type="taxonomic scope" value="Bacteria"/>
</dbReference>
<dbReference type="HOGENOM" id="CLU_081854_1_1_11"/>
<dbReference type="OrthoDB" id="9789567at2"/>
<dbReference type="PhylomeDB" id="Q2J7K8"/>
<dbReference type="UniPathway" id="UPA00391"/>
<dbReference type="Proteomes" id="UP000001937">
    <property type="component" value="Chromosome"/>
</dbReference>
<dbReference type="GO" id="GO:0005524">
    <property type="term" value="F:ATP binding"/>
    <property type="evidence" value="ECO:0007669"/>
    <property type="project" value="UniProtKB-UniRule"/>
</dbReference>
<dbReference type="GO" id="GO:0016879">
    <property type="term" value="F:ligase activity, forming carbon-nitrogen bonds"/>
    <property type="evidence" value="ECO:0007669"/>
    <property type="project" value="UniProtKB-UniRule"/>
</dbReference>
<dbReference type="GO" id="GO:0008270">
    <property type="term" value="F:zinc ion binding"/>
    <property type="evidence" value="ECO:0007669"/>
    <property type="project" value="UniProtKB-UniRule"/>
</dbReference>
<dbReference type="GO" id="GO:0008616">
    <property type="term" value="P:queuosine biosynthetic process"/>
    <property type="evidence" value="ECO:0007669"/>
    <property type="project" value="UniProtKB-UniRule"/>
</dbReference>
<dbReference type="CDD" id="cd01995">
    <property type="entry name" value="QueC-like"/>
    <property type="match status" value="1"/>
</dbReference>
<dbReference type="Gene3D" id="3.40.50.620">
    <property type="entry name" value="HUPs"/>
    <property type="match status" value="1"/>
</dbReference>
<dbReference type="HAMAP" id="MF_01633">
    <property type="entry name" value="QueC"/>
    <property type="match status" value="1"/>
</dbReference>
<dbReference type="InterPro" id="IPR018317">
    <property type="entry name" value="QueC"/>
</dbReference>
<dbReference type="InterPro" id="IPR014729">
    <property type="entry name" value="Rossmann-like_a/b/a_fold"/>
</dbReference>
<dbReference type="NCBIfam" id="TIGR00364">
    <property type="entry name" value="7-cyano-7-deazaguanine synthase QueC"/>
    <property type="match status" value="1"/>
</dbReference>
<dbReference type="PANTHER" id="PTHR42914">
    <property type="entry name" value="7-CYANO-7-DEAZAGUANINE SYNTHASE"/>
    <property type="match status" value="1"/>
</dbReference>
<dbReference type="PANTHER" id="PTHR42914:SF1">
    <property type="entry name" value="7-CYANO-7-DEAZAGUANINE SYNTHASE"/>
    <property type="match status" value="1"/>
</dbReference>
<dbReference type="Pfam" id="PF06508">
    <property type="entry name" value="QueC"/>
    <property type="match status" value="1"/>
</dbReference>
<dbReference type="PIRSF" id="PIRSF006293">
    <property type="entry name" value="ExsB"/>
    <property type="match status" value="1"/>
</dbReference>
<dbReference type="SUPFAM" id="SSF52402">
    <property type="entry name" value="Adenine nucleotide alpha hydrolases-like"/>
    <property type="match status" value="1"/>
</dbReference>
<organism>
    <name type="scientific">Frankia casuarinae (strain DSM 45818 / CECT 9043 / HFP020203 / CcI3)</name>
    <dbReference type="NCBI Taxonomy" id="106370"/>
    <lineage>
        <taxon>Bacteria</taxon>
        <taxon>Bacillati</taxon>
        <taxon>Actinomycetota</taxon>
        <taxon>Actinomycetes</taxon>
        <taxon>Frankiales</taxon>
        <taxon>Frankiaceae</taxon>
        <taxon>Frankia</taxon>
    </lineage>
</organism>
<evidence type="ECO:0000255" key="1">
    <source>
        <dbReference type="HAMAP-Rule" id="MF_01633"/>
    </source>
</evidence>
<name>QUEC_FRACC</name>
<reference key="1">
    <citation type="journal article" date="2007" name="Genome Res.">
        <title>Genome characteristics of facultatively symbiotic Frankia sp. strains reflect host range and host plant biogeography.</title>
        <authorList>
            <person name="Normand P."/>
            <person name="Lapierre P."/>
            <person name="Tisa L.S."/>
            <person name="Gogarten J.P."/>
            <person name="Alloisio N."/>
            <person name="Bagnarol E."/>
            <person name="Bassi C.A."/>
            <person name="Berry A.M."/>
            <person name="Bickhart D.M."/>
            <person name="Choisne N."/>
            <person name="Couloux A."/>
            <person name="Cournoyer B."/>
            <person name="Cruveiller S."/>
            <person name="Daubin V."/>
            <person name="Demange N."/>
            <person name="Francino M.P."/>
            <person name="Goltsman E."/>
            <person name="Huang Y."/>
            <person name="Kopp O.R."/>
            <person name="Labarre L."/>
            <person name="Lapidus A."/>
            <person name="Lavire C."/>
            <person name="Marechal J."/>
            <person name="Martinez M."/>
            <person name="Mastronunzio J.E."/>
            <person name="Mullin B.C."/>
            <person name="Niemann J."/>
            <person name="Pujic P."/>
            <person name="Rawnsley T."/>
            <person name="Rouy Z."/>
            <person name="Schenowitz C."/>
            <person name="Sellstedt A."/>
            <person name="Tavares F."/>
            <person name="Tomkins J.P."/>
            <person name="Vallenet D."/>
            <person name="Valverde C."/>
            <person name="Wall L.G."/>
            <person name="Wang Y."/>
            <person name="Medigue C."/>
            <person name="Benson D.R."/>
        </authorList>
    </citation>
    <scope>NUCLEOTIDE SEQUENCE [LARGE SCALE GENOMIC DNA]</scope>
    <source>
        <strain>DSM 45818 / CECT 9043 / HFP020203 / CcI3</strain>
    </source>
</reference>
<proteinExistence type="inferred from homology"/>